<proteinExistence type="inferred from homology"/>
<accession>Q8K9U8</accession>
<evidence type="ECO:0000250" key="1"/>
<evidence type="ECO:0000250" key="2">
    <source>
        <dbReference type="UniProtKB" id="P0A9M2"/>
    </source>
</evidence>
<evidence type="ECO:0000250" key="3">
    <source>
        <dbReference type="UniProtKB" id="P9WHQ9"/>
    </source>
</evidence>
<evidence type="ECO:0000305" key="4"/>
<protein>
    <recommendedName>
        <fullName>Hypoxanthine phosphoribosyltransferase</fullName>
        <shortName>HPRT</shortName>
        <ecNumber evidence="2">2.4.2.8</ecNumber>
    </recommendedName>
</protein>
<gene>
    <name type="primary">hpt</name>
    <name type="ordered locus">BUsg_189</name>
</gene>
<keyword id="KW-0963">Cytoplasm</keyword>
<keyword id="KW-0328">Glycosyltransferase</keyword>
<keyword id="KW-0460">Magnesium</keyword>
<keyword id="KW-0479">Metal-binding</keyword>
<keyword id="KW-0547">Nucleotide-binding</keyword>
<keyword id="KW-0660">Purine salvage</keyword>
<keyword id="KW-0808">Transferase</keyword>
<feature type="chain" id="PRO_0000139631" description="Hypoxanthine phosphoribosyltransferase">
    <location>
        <begin position="1"/>
        <end position="177"/>
    </location>
</feature>
<feature type="active site" description="Proton acceptor" evidence="2">
    <location>
        <position position="103"/>
    </location>
</feature>
<feature type="binding site" evidence="3">
    <location>
        <position position="43"/>
    </location>
    <ligand>
        <name>diphosphate</name>
        <dbReference type="ChEBI" id="CHEBI:33019"/>
    </ligand>
</feature>
<feature type="binding site" evidence="3">
    <location>
        <position position="44"/>
    </location>
    <ligand>
        <name>diphosphate</name>
        <dbReference type="ChEBI" id="CHEBI:33019"/>
    </ligand>
</feature>
<feature type="binding site" evidence="2">
    <location>
        <position position="99"/>
    </location>
    <ligand>
        <name>GMP</name>
        <dbReference type="ChEBI" id="CHEBI:58115"/>
    </ligand>
</feature>
<feature type="binding site" evidence="2">
    <location>
        <position position="99"/>
    </location>
    <ligand>
        <name>IMP</name>
        <dbReference type="ChEBI" id="CHEBI:58053"/>
    </ligand>
</feature>
<feature type="binding site" evidence="2">
    <location>
        <position position="99"/>
    </location>
    <ligand>
        <name>Mg(2+)</name>
        <dbReference type="ChEBI" id="CHEBI:18420"/>
    </ligand>
</feature>
<feature type="binding site" evidence="2">
    <location>
        <position position="100"/>
    </location>
    <ligand>
        <name>Mg(2+)</name>
        <dbReference type="ChEBI" id="CHEBI:18420"/>
    </ligand>
</feature>
<feature type="binding site" evidence="2">
    <location>
        <begin position="103"/>
        <end position="108"/>
    </location>
    <ligand>
        <name>GMP</name>
        <dbReference type="ChEBI" id="CHEBI:58115"/>
    </ligand>
</feature>
<feature type="binding site" evidence="2">
    <location>
        <begin position="103"/>
        <end position="108"/>
    </location>
    <ligand>
        <name>IMP</name>
        <dbReference type="ChEBI" id="CHEBI:58053"/>
    </ligand>
</feature>
<feature type="binding site" evidence="2">
    <location>
        <position position="131"/>
    </location>
    <ligand>
        <name>GMP</name>
        <dbReference type="ChEBI" id="CHEBI:58115"/>
    </ligand>
</feature>
<feature type="binding site" evidence="2">
    <location>
        <position position="131"/>
    </location>
    <ligand>
        <name>IMP</name>
        <dbReference type="ChEBI" id="CHEBI:58053"/>
    </ligand>
</feature>
<feature type="binding site" evidence="2">
    <location>
        <position position="159"/>
    </location>
    <ligand>
        <name>GMP</name>
        <dbReference type="ChEBI" id="CHEBI:58115"/>
    </ligand>
</feature>
<feature type="binding site" evidence="3">
    <location>
        <position position="165"/>
    </location>
    <ligand>
        <name>diphosphate</name>
        <dbReference type="ChEBI" id="CHEBI:33019"/>
    </ligand>
</feature>
<dbReference type="EC" id="2.4.2.8" evidence="2"/>
<dbReference type="EMBL" id="AE013218">
    <property type="protein sequence ID" value="AAM67754.1"/>
    <property type="molecule type" value="Genomic_DNA"/>
</dbReference>
<dbReference type="RefSeq" id="WP_011053721.1">
    <property type="nucleotide sequence ID" value="NC_004061.1"/>
</dbReference>
<dbReference type="SMR" id="Q8K9U8"/>
<dbReference type="STRING" id="198804.BUsg_189"/>
<dbReference type="GeneID" id="93003657"/>
<dbReference type="KEGG" id="bas:BUsg_189"/>
<dbReference type="eggNOG" id="COG0634">
    <property type="taxonomic scope" value="Bacteria"/>
</dbReference>
<dbReference type="HOGENOM" id="CLU_073615_0_0_6"/>
<dbReference type="UniPathway" id="UPA00591">
    <property type="reaction ID" value="UER00648"/>
</dbReference>
<dbReference type="Proteomes" id="UP000000416">
    <property type="component" value="Chromosome"/>
</dbReference>
<dbReference type="GO" id="GO:0005829">
    <property type="term" value="C:cytosol"/>
    <property type="evidence" value="ECO:0007669"/>
    <property type="project" value="TreeGrafter"/>
</dbReference>
<dbReference type="GO" id="GO:0052657">
    <property type="term" value="F:guanine phosphoribosyltransferase activity"/>
    <property type="evidence" value="ECO:0007669"/>
    <property type="project" value="RHEA"/>
</dbReference>
<dbReference type="GO" id="GO:0004422">
    <property type="term" value="F:hypoxanthine phosphoribosyltransferase activity"/>
    <property type="evidence" value="ECO:0007669"/>
    <property type="project" value="InterPro"/>
</dbReference>
<dbReference type="GO" id="GO:0000287">
    <property type="term" value="F:magnesium ion binding"/>
    <property type="evidence" value="ECO:0007669"/>
    <property type="project" value="TreeGrafter"/>
</dbReference>
<dbReference type="GO" id="GO:0000166">
    <property type="term" value="F:nucleotide binding"/>
    <property type="evidence" value="ECO:0007669"/>
    <property type="project" value="UniProtKB-KW"/>
</dbReference>
<dbReference type="GO" id="GO:0032263">
    <property type="term" value="P:GMP salvage"/>
    <property type="evidence" value="ECO:0007669"/>
    <property type="project" value="TreeGrafter"/>
</dbReference>
<dbReference type="GO" id="GO:0006178">
    <property type="term" value="P:guanine salvage"/>
    <property type="evidence" value="ECO:0007669"/>
    <property type="project" value="TreeGrafter"/>
</dbReference>
<dbReference type="GO" id="GO:0046100">
    <property type="term" value="P:hypoxanthine metabolic process"/>
    <property type="evidence" value="ECO:0007669"/>
    <property type="project" value="TreeGrafter"/>
</dbReference>
<dbReference type="GO" id="GO:0032264">
    <property type="term" value="P:IMP salvage"/>
    <property type="evidence" value="ECO:0007669"/>
    <property type="project" value="UniProtKB-UniPathway"/>
</dbReference>
<dbReference type="GO" id="GO:0006166">
    <property type="term" value="P:purine ribonucleoside salvage"/>
    <property type="evidence" value="ECO:0007669"/>
    <property type="project" value="UniProtKB-KW"/>
</dbReference>
<dbReference type="CDD" id="cd06223">
    <property type="entry name" value="PRTases_typeI"/>
    <property type="match status" value="1"/>
</dbReference>
<dbReference type="FunFam" id="3.40.50.2020:FF:000006">
    <property type="entry name" value="Hypoxanthine phosphoribosyltransferase"/>
    <property type="match status" value="1"/>
</dbReference>
<dbReference type="Gene3D" id="3.40.50.2020">
    <property type="match status" value="1"/>
</dbReference>
<dbReference type="InterPro" id="IPR050408">
    <property type="entry name" value="HGPRT"/>
</dbReference>
<dbReference type="InterPro" id="IPR005904">
    <property type="entry name" value="Hxn_phspho_trans"/>
</dbReference>
<dbReference type="InterPro" id="IPR000836">
    <property type="entry name" value="PRibTrfase_dom"/>
</dbReference>
<dbReference type="InterPro" id="IPR029057">
    <property type="entry name" value="PRTase-like"/>
</dbReference>
<dbReference type="NCBIfam" id="TIGR01203">
    <property type="entry name" value="HGPRTase"/>
    <property type="match status" value="1"/>
</dbReference>
<dbReference type="PANTHER" id="PTHR43340:SF1">
    <property type="entry name" value="HYPOXANTHINE PHOSPHORIBOSYLTRANSFERASE"/>
    <property type="match status" value="1"/>
</dbReference>
<dbReference type="PANTHER" id="PTHR43340">
    <property type="entry name" value="HYPOXANTHINE-GUANINE PHOSPHORIBOSYLTRANSFERASE"/>
    <property type="match status" value="1"/>
</dbReference>
<dbReference type="Pfam" id="PF00156">
    <property type="entry name" value="Pribosyltran"/>
    <property type="match status" value="1"/>
</dbReference>
<dbReference type="SUPFAM" id="SSF53271">
    <property type="entry name" value="PRTase-like"/>
    <property type="match status" value="1"/>
</dbReference>
<dbReference type="PROSITE" id="PS00103">
    <property type="entry name" value="PUR_PYR_PR_TRANSFER"/>
    <property type="match status" value="1"/>
</dbReference>
<name>HPRT_BUCAP</name>
<organism>
    <name type="scientific">Buchnera aphidicola subsp. Schizaphis graminum (strain Sg)</name>
    <dbReference type="NCBI Taxonomy" id="198804"/>
    <lineage>
        <taxon>Bacteria</taxon>
        <taxon>Pseudomonadati</taxon>
        <taxon>Pseudomonadota</taxon>
        <taxon>Gammaproteobacteria</taxon>
        <taxon>Enterobacterales</taxon>
        <taxon>Erwiniaceae</taxon>
        <taxon>Buchnera</taxon>
    </lineage>
</organism>
<comment type="function">
    <text evidence="2">Purine salvage pathway enzyme which catalyzes the transfer of the ribosyl-5-phosphate group from 5-phospho-alpha-D-ribose 1-diphosphate (PRPP) to the N9 position of hypoxanthine to yield IMP (inosine 5'-monophosphate). To a lesser extent, can also act on guanine leading to GMP, but shows a highly less efficient activity with xanthine.</text>
</comment>
<comment type="catalytic activity">
    <reaction evidence="2">
        <text>IMP + diphosphate = hypoxanthine + 5-phospho-alpha-D-ribose 1-diphosphate</text>
        <dbReference type="Rhea" id="RHEA:17973"/>
        <dbReference type="ChEBI" id="CHEBI:17368"/>
        <dbReference type="ChEBI" id="CHEBI:33019"/>
        <dbReference type="ChEBI" id="CHEBI:58017"/>
        <dbReference type="ChEBI" id="CHEBI:58053"/>
        <dbReference type="EC" id="2.4.2.8"/>
    </reaction>
    <physiologicalReaction direction="right-to-left" evidence="2">
        <dbReference type="Rhea" id="RHEA:17975"/>
    </physiologicalReaction>
</comment>
<comment type="catalytic activity">
    <reaction evidence="2">
        <text>GMP + diphosphate = guanine + 5-phospho-alpha-D-ribose 1-diphosphate</text>
        <dbReference type="Rhea" id="RHEA:25424"/>
        <dbReference type="ChEBI" id="CHEBI:16235"/>
        <dbReference type="ChEBI" id="CHEBI:33019"/>
        <dbReference type="ChEBI" id="CHEBI:58017"/>
        <dbReference type="ChEBI" id="CHEBI:58115"/>
        <dbReference type="EC" id="2.4.2.8"/>
    </reaction>
    <physiologicalReaction direction="right-to-left" evidence="2">
        <dbReference type="Rhea" id="RHEA:25426"/>
    </physiologicalReaction>
</comment>
<comment type="cofactor">
    <cofactor evidence="2">
        <name>Mg(2+)</name>
        <dbReference type="ChEBI" id="CHEBI:18420"/>
    </cofactor>
</comment>
<comment type="pathway">
    <text evidence="2">Purine metabolism; IMP biosynthesis via salvage pathway; IMP from hypoxanthine: step 1/1.</text>
</comment>
<comment type="subunit">
    <text evidence="2">Homotetramer.</text>
</comment>
<comment type="subcellular location">
    <subcellularLocation>
        <location evidence="1">Cytoplasm</location>
    </subcellularLocation>
</comment>
<comment type="similarity">
    <text evidence="4">Belongs to the purine/pyrimidine phosphoribosyltransferase family.</text>
</comment>
<sequence>MKHTIKVIISEKELDIRVRELGEEITKKYKNSKNKIILIALLRGSFVFIADLCRRIKIEHEIDFMTTSSYGRGMISTGDVKIIKDLDEDIYNKNVLIVEDIIDSGKTLSKVLGILKLRNPKSLSICTLLDKPECREVNINIDFVGFSIPDEFMVGYGIDYAQSYRYLPYIGKVIFKK</sequence>
<reference key="1">
    <citation type="journal article" date="2002" name="Science">
        <title>50 million years of genomic stasis in endosymbiotic bacteria.</title>
        <authorList>
            <person name="Tamas I."/>
            <person name="Klasson L."/>
            <person name="Canbaeck B."/>
            <person name="Naeslund A.K."/>
            <person name="Eriksson A.-S."/>
            <person name="Wernegreen J.J."/>
            <person name="Sandstroem J.P."/>
            <person name="Moran N.A."/>
            <person name="Andersson S.G.E."/>
        </authorList>
    </citation>
    <scope>NUCLEOTIDE SEQUENCE [LARGE SCALE GENOMIC DNA]</scope>
    <source>
        <strain>Sg</strain>
    </source>
</reference>